<comment type="function">
    <text evidence="1">Allows the formation of correctly charged Asn-tRNA(Asn) or Gln-tRNA(Gln) through the transamidation of misacylated Asp-tRNA(Asn) or Glu-tRNA(Gln) in organisms which lack either or both of asparaginyl-tRNA or glutaminyl-tRNA synthetases. The reaction takes place in the presence of glutamine and ATP through an activated phospho-Asp-tRNA(Asn) or phospho-Glu-tRNA(Gln).</text>
</comment>
<comment type="catalytic activity">
    <reaction evidence="1">
        <text>L-glutamyl-tRNA(Gln) + L-glutamine + ATP + H2O = L-glutaminyl-tRNA(Gln) + L-glutamate + ADP + phosphate + H(+)</text>
        <dbReference type="Rhea" id="RHEA:17521"/>
        <dbReference type="Rhea" id="RHEA-COMP:9681"/>
        <dbReference type="Rhea" id="RHEA-COMP:9684"/>
        <dbReference type="ChEBI" id="CHEBI:15377"/>
        <dbReference type="ChEBI" id="CHEBI:15378"/>
        <dbReference type="ChEBI" id="CHEBI:29985"/>
        <dbReference type="ChEBI" id="CHEBI:30616"/>
        <dbReference type="ChEBI" id="CHEBI:43474"/>
        <dbReference type="ChEBI" id="CHEBI:58359"/>
        <dbReference type="ChEBI" id="CHEBI:78520"/>
        <dbReference type="ChEBI" id="CHEBI:78521"/>
        <dbReference type="ChEBI" id="CHEBI:456216"/>
    </reaction>
</comment>
<comment type="catalytic activity">
    <reaction evidence="1">
        <text>L-aspartyl-tRNA(Asn) + L-glutamine + ATP + H2O = L-asparaginyl-tRNA(Asn) + L-glutamate + ADP + phosphate + 2 H(+)</text>
        <dbReference type="Rhea" id="RHEA:14513"/>
        <dbReference type="Rhea" id="RHEA-COMP:9674"/>
        <dbReference type="Rhea" id="RHEA-COMP:9677"/>
        <dbReference type="ChEBI" id="CHEBI:15377"/>
        <dbReference type="ChEBI" id="CHEBI:15378"/>
        <dbReference type="ChEBI" id="CHEBI:29985"/>
        <dbReference type="ChEBI" id="CHEBI:30616"/>
        <dbReference type="ChEBI" id="CHEBI:43474"/>
        <dbReference type="ChEBI" id="CHEBI:58359"/>
        <dbReference type="ChEBI" id="CHEBI:78515"/>
        <dbReference type="ChEBI" id="CHEBI:78516"/>
        <dbReference type="ChEBI" id="CHEBI:456216"/>
    </reaction>
</comment>
<comment type="subunit">
    <text evidence="1">Heterotrimer of A, B and C subunits.</text>
</comment>
<comment type="similarity">
    <text evidence="1">Belongs to the GatB/GatE family. GatB subfamily.</text>
</comment>
<evidence type="ECO:0000255" key="1">
    <source>
        <dbReference type="HAMAP-Rule" id="MF_00121"/>
    </source>
</evidence>
<accession>Q7VEG1</accession>
<name>GATB_PROMA</name>
<sequence length="492" mass="55036">MTEQKVDWEPVIGLETHVQLGTNSKIFTSASTSFGDDPNTHIDPIVCGLPGTLPVLNKKVLEFAVKASMALNLKIAKHCKFDRKQYFYPDLPKNYQISQFDEPIAEEGWIEVEVAEKGKETYLKKIGIERLHMEEDAGKLVHAGSDRLSGSKYSLVDYNRAGVALAEIVSKPDLRSGREASEYASEIRRIVRYLGVSDGNMQEGSLRCDVNISVRRGPNAPFGTKVEIKNMNSFSAIQKACEYEIKRQISTYESGGIVHQETRLWDETKQLTKSMRSKEGSSDYRYFPDPDLGPIEVSVELQEKWRSELPELPSSKRHRYAEELGLSVYDARVLTDDYQMARYFEIVVLEGADPKLASNWITGDIAAHINANKKSFENLLLTPKQLAEMLLLISQGKISGKIAKEILPELLEKGGSPKELVEERGLGMISDPKVLGAIVDQLLSDYPNEVESYRGGKNKLQGFFVGQLMKKTSGKADPKLGNQILTKKLKGE</sequence>
<gene>
    <name evidence="1" type="primary">gatB</name>
    <name type="ordered locus">Pro_0052</name>
</gene>
<organism>
    <name type="scientific">Prochlorococcus marinus (strain SARG / CCMP1375 / SS120)</name>
    <dbReference type="NCBI Taxonomy" id="167539"/>
    <lineage>
        <taxon>Bacteria</taxon>
        <taxon>Bacillati</taxon>
        <taxon>Cyanobacteriota</taxon>
        <taxon>Cyanophyceae</taxon>
        <taxon>Synechococcales</taxon>
        <taxon>Prochlorococcaceae</taxon>
        <taxon>Prochlorococcus</taxon>
    </lineage>
</organism>
<reference key="1">
    <citation type="journal article" date="2003" name="Proc. Natl. Acad. Sci. U.S.A.">
        <title>Genome sequence of the cyanobacterium Prochlorococcus marinus SS120, a nearly minimal oxyphototrophic genome.</title>
        <authorList>
            <person name="Dufresne A."/>
            <person name="Salanoubat M."/>
            <person name="Partensky F."/>
            <person name="Artiguenave F."/>
            <person name="Axmann I.M."/>
            <person name="Barbe V."/>
            <person name="Duprat S."/>
            <person name="Galperin M.Y."/>
            <person name="Koonin E.V."/>
            <person name="Le Gall F."/>
            <person name="Makarova K.S."/>
            <person name="Ostrowski M."/>
            <person name="Oztas S."/>
            <person name="Robert C."/>
            <person name="Rogozin I.B."/>
            <person name="Scanlan D.J."/>
            <person name="Tandeau de Marsac N."/>
            <person name="Weissenbach J."/>
            <person name="Wincker P."/>
            <person name="Wolf Y.I."/>
            <person name="Hess W.R."/>
        </authorList>
    </citation>
    <scope>NUCLEOTIDE SEQUENCE [LARGE SCALE GENOMIC DNA]</scope>
    <source>
        <strain>SARG / CCMP1375 / SS120</strain>
    </source>
</reference>
<proteinExistence type="inferred from homology"/>
<dbReference type="EC" id="6.3.5.-" evidence="1"/>
<dbReference type="EMBL" id="AE017126">
    <property type="protein sequence ID" value="AAP99098.1"/>
    <property type="molecule type" value="Genomic_DNA"/>
</dbReference>
<dbReference type="RefSeq" id="NP_874446.1">
    <property type="nucleotide sequence ID" value="NC_005042.1"/>
</dbReference>
<dbReference type="RefSeq" id="WP_011124207.1">
    <property type="nucleotide sequence ID" value="NC_005042.1"/>
</dbReference>
<dbReference type="SMR" id="Q7VEG1"/>
<dbReference type="STRING" id="167539.Pro_0052"/>
<dbReference type="EnsemblBacteria" id="AAP99098">
    <property type="protein sequence ID" value="AAP99098"/>
    <property type="gene ID" value="Pro_0052"/>
</dbReference>
<dbReference type="KEGG" id="pma:Pro_0052"/>
<dbReference type="PATRIC" id="fig|167539.5.peg.55"/>
<dbReference type="eggNOG" id="COG0064">
    <property type="taxonomic scope" value="Bacteria"/>
</dbReference>
<dbReference type="HOGENOM" id="CLU_019240_0_0_3"/>
<dbReference type="OrthoDB" id="9804078at2"/>
<dbReference type="Proteomes" id="UP000001420">
    <property type="component" value="Chromosome"/>
</dbReference>
<dbReference type="GO" id="GO:0050566">
    <property type="term" value="F:asparaginyl-tRNA synthase (glutamine-hydrolyzing) activity"/>
    <property type="evidence" value="ECO:0007669"/>
    <property type="project" value="RHEA"/>
</dbReference>
<dbReference type="GO" id="GO:0005524">
    <property type="term" value="F:ATP binding"/>
    <property type="evidence" value="ECO:0007669"/>
    <property type="project" value="UniProtKB-KW"/>
</dbReference>
<dbReference type="GO" id="GO:0050567">
    <property type="term" value="F:glutaminyl-tRNA synthase (glutamine-hydrolyzing) activity"/>
    <property type="evidence" value="ECO:0007669"/>
    <property type="project" value="UniProtKB-UniRule"/>
</dbReference>
<dbReference type="GO" id="GO:0070681">
    <property type="term" value="P:glutaminyl-tRNAGln biosynthesis via transamidation"/>
    <property type="evidence" value="ECO:0007669"/>
    <property type="project" value="TreeGrafter"/>
</dbReference>
<dbReference type="GO" id="GO:0006412">
    <property type="term" value="P:translation"/>
    <property type="evidence" value="ECO:0007669"/>
    <property type="project" value="UniProtKB-UniRule"/>
</dbReference>
<dbReference type="FunFam" id="1.10.10.410:FF:000001">
    <property type="entry name" value="Aspartyl/glutamyl-tRNA(Asn/Gln) amidotransferase subunit B"/>
    <property type="match status" value="1"/>
</dbReference>
<dbReference type="FunFam" id="1.10.150.380:FF:000001">
    <property type="entry name" value="Aspartyl/glutamyl-tRNA(Asn/Gln) amidotransferase subunit B"/>
    <property type="match status" value="1"/>
</dbReference>
<dbReference type="Gene3D" id="1.10.10.410">
    <property type="match status" value="1"/>
</dbReference>
<dbReference type="Gene3D" id="1.10.150.380">
    <property type="entry name" value="GatB domain, N-terminal subdomain"/>
    <property type="match status" value="1"/>
</dbReference>
<dbReference type="HAMAP" id="MF_00121">
    <property type="entry name" value="GatB"/>
    <property type="match status" value="1"/>
</dbReference>
<dbReference type="InterPro" id="IPR017959">
    <property type="entry name" value="Asn/Gln-tRNA_amidoTrfase_suB/E"/>
</dbReference>
<dbReference type="InterPro" id="IPR006075">
    <property type="entry name" value="Asn/Gln-tRNA_Trfase_suB/E_cat"/>
</dbReference>
<dbReference type="InterPro" id="IPR018027">
    <property type="entry name" value="Asn/Gln_amidotransferase"/>
</dbReference>
<dbReference type="InterPro" id="IPR003789">
    <property type="entry name" value="Asn/Gln_tRNA_amidoTrase-B-like"/>
</dbReference>
<dbReference type="InterPro" id="IPR004413">
    <property type="entry name" value="GatB"/>
</dbReference>
<dbReference type="InterPro" id="IPR042114">
    <property type="entry name" value="GatB_C_1"/>
</dbReference>
<dbReference type="InterPro" id="IPR023168">
    <property type="entry name" value="GatB_Yqey_C_2"/>
</dbReference>
<dbReference type="InterPro" id="IPR017958">
    <property type="entry name" value="Gln-tRNA_amidoTrfase_suB_CS"/>
</dbReference>
<dbReference type="InterPro" id="IPR014746">
    <property type="entry name" value="Gln_synth/guanido_kin_cat_dom"/>
</dbReference>
<dbReference type="NCBIfam" id="TIGR00133">
    <property type="entry name" value="gatB"/>
    <property type="match status" value="1"/>
</dbReference>
<dbReference type="NCBIfam" id="NF004012">
    <property type="entry name" value="PRK05477.1-2"/>
    <property type="match status" value="1"/>
</dbReference>
<dbReference type="NCBIfam" id="NF004014">
    <property type="entry name" value="PRK05477.1-4"/>
    <property type="match status" value="1"/>
</dbReference>
<dbReference type="PANTHER" id="PTHR11659">
    <property type="entry name" value="GLUTAMYL-TRNA GLN AMIDOTRANSFERASE SUBUNIT B MITOCHONDRIAL AND PROKARYOTIC PET112-RELATED"/>
    <property type="match status" value="1"/>
</dbReference>
<dbReference type="PANTHER" id="PTHR11659:SF0">
    <property type="entry name" value="GLUTAMYL-TRNA(GLN) AMIDOTRANSFERASE SUBUNIT B, MITOCHONDRIAL"/>
    <property type="match status" value="1"/>
</dbReference>
<dbReference type="Pfam" id="PF02934">
    <property type="entry name" value="GatB_N"/>
    <property type="match status" value="1"/>
</dbReference>
<dbReference type="Pfam" id="PF02637">
    <property type="entry name" value="GatB_Yqey"/>
    <property type="match status" value="1"/>
</dbReference>
<dbReference type="SMART" id="SM00845">
    <property type="entry name" value="GatB_Yqey"/>
    <property type="match status" value="1"/>
</dbReference>
<dbReference type="SUPFAM" id="SSF89095">
    <property type="entry name" value="GatB/YqeY motif"/>
    <property type="match status" value="1"/>
</dbReference>
<dbReference type="SUPFAM" id="SSF55931">
    <property type="entry name" value="Glutamine synthetase/guanido kinase"/>
    <property type="match status" value="1"/>
</dbReference>
<dbReference type="PROSITE" id="PS01234">
    <property type="entry name" value="GATB"/>
    <property type="match status" value="1"/>
</dbReference>
<feature type="chain" id="PRO_0000148820" description="Aspartyl/glutamyl-tRNA(Asn/Gln) amidotransferase subunit B">
    <location>
        <begin position="1"/>
        <end position="492"/>
    </location>
</feature>
<keyword id="KW-0067">ATP-binding</keyword>
<keyword id="KW-0436">Ligase</keyword>
<keyword id="KW-0547">Nucleotide-binding</keyword>
<keyword id="KW-0648">Protein biosynthesis</keyword>
<keyword id="KW-1185">Reference proteome</keyword>
<protein>
    <recommendedName>
        <fullName evidence="1">Aspartyl/glutamyl-tRNA(Asn/Gln) amidotransferase subunit B</fullName>
        <shortName evidence="1">Asp/Glu-ADT subunit B</shortName>
        <ecNumber evidence="1">6.3.5.-</ecNumber>
    </recommendedName>
</protein>